<protein>
    <recommendedName>
        <fullName evidence="3">Gluconolactonase</fullName>
        <ecNumber evidence="5">3.1.1.17</ecNumber>
    </recommendedName>
    <alternativeName>
        <fullName>D-glucono-delta-lactone lactonohydrolase</fullName>
    </alternativeName>
    <component>
        <recommendedName>
            <fullName evidence="3">Gluconolactonase</fullName>
        </recommendedName>
    </component>
    <component>
        <recommendedName>
            <fullName>Gluconolactonase minor isoform</fullName>
        </recommendedName>
    </component>
</protein>
<sequence length="356" mass="38453">MTTGRMSRRECLSAAVMVPIAAMTATATITGSAQAAKNNMNGSTIGKITKFSPRLDAILDVSTPIEVIASDIQWSEGPVWVKNGNFLLFSDPPANIMRKWTPDAGVSIFLKPSGHAEPIPAGQFREPGSNGMKVGPDGKIWVADSGTRAIMKVDPVTRQRSVVVDNYKGKRFNSPNDLFFSKSGAVYFTDPPYGLTNLDESDIKEMNYNGVFRLSPDGRLDLIEAGLSRPNGLALSPDETKLYVSNSDRASPNIWVYSLDSNGLPTSRTLLRNFRKEYFDQGLAGLPDGMNIDKQGNLFASAPGGIYIFAPDGECLGLISGNPGQPLSNCCFGEKGQTLFISASHNVVRVRTKTFG</sequence>
<feature type="signal peptide" description="Tat-type signal" evidence="1 2">
    <location>
        <begin position="1"/>
        <end position="35"/>
    </location>
</feature>
<feature type="chain" id="PRO_0000021336" description="Gluconolactonase">
    <location>
        <begin position="36"/>
        <end position="356"/>
    </location>
</feature>
<feature type="chain" id="PRO_0000021337" description="Gluconolactonase minor isoform" evidence="5">
    <location>
        <begin position="41"/>
        <end position="356"/>
    </location>
</feature>
<feature type="sequence conflict" description="In Ref. 1; CAA47637." evidence="4" ref="1">
    <original>Q</original>
    <variation>E</variation>
    <location>
        <position position="34"/>
    </location>
</feature>
<feature type="sequence conflict" description="In Ref. 1; CAA47637." evidence="4" ref="1">
    <location>
        <position position="162"/>
    </location>
</feature>
<feature type="sequence conflict" description="In Ref. 1; CAA47637." evidence="4" ref="1">
    <original>SGNPGQPLSNCCFGEKGQTLFISASHNVVRVRTKTFG</original>
    <variation>FW</variation>
    <location>
        <begin position="320"/>
        <end position="356"/>
    </location>
</feature>
<accession>Q01578</accession>
<accession>Q5NLY7</accession>
<reference key="1">
    <citation type="journal article" date="1992" name="Biochim. Biophys. Acta">
        <title>Isolation and characterization of the gene encoding gluconolactonase from Zymomonas mobilis.</title>
        <authorList>
            <person name="Kanagasundaram V."/>
            <person name="Scopes R."/>
        </authorList>
    </citation>
    <scope>NUCLEOTIDE SEQUENCE [GENOMIC DNA]</scope>
    <scope>PROTEIN SEQUENCE OF 36-58</scope>
    <scope>FUNCTION</scope>
    <scope>SUBUNIT</scope>
    <scope>SUBCELLULAR LOCATION</scope>
    <source>
        <strain>ATCC 29191 / DSM 3580 / JCM 10190 / CECT 560 / NBRC 13756 / NCIMB 11199 / NRRL B-4490 / ZM6</strain>
    </source>
</reference>
<reference key="2">
    <citation type="journal article" date="2005" name="Nat. Biotechnol.">
        <title>The genome sequence of the ethanologenic bacterium Zymomonas mobilis ZM4.</title>
        <authorList>
            <person name="Seo J.-S."/>
            <person name="Chong H."/>
            <person name="Park H.S."/>
            <person name="Yoon K.-O."/>
            <person name="Jung C."/>
            <person name="Kim J.J."/>
            <person name="Hong J.H."/>
            <person name="Kim H."/>
            <person name="Kim J.-H."/>
            <person name="Kil J.-I."/>
            <person name="Park C.J."/>
            <person name="Oh H.-M."/>
            <person name="Lee J.-S."/>
            <person name="Jin S.-J."/>
            <person name="Um H.-W."/>
            <person name="Lee H.-J."/>
            <person name="Oh S.-J."/>
            <person name="Kim J.Y."/>
            <person name="Kang H.L."/>
            <person name="Lee S.Y."/>
            <person name="Lee K.J."/>
            <person name="Kang H.S."/>
        </authorList>
    </citation>
    <scope>NUCLEOTIDE SEQUENCE [LARGE SCALE GENOMIC DNA]</scope>
    <source>
        <strain>ATCC 31821 / ZM4 / CP4</strain>
    </source>
</reference>
<name>GNL_ZYMMO</name>
<comment type="function">
    <text evidence="5">Hydrolyzes the gluconolactone formed by glucose-fructose oxidoreductase, and that formed in aerobic conditions by the glucose dehydrogenase present.</text>
</comment>
<comment type="catalytic activity">
    <reaction evidence="5">
        <text>D-glucono-1,5-lactone + H2O = D-gluconate + H(+)</text>
        <dbReference type="Rhea" id="RHEA:10440"/>
        <dbReference type="ChEBI" id="CHEBI:15377"/>
        <dbReference type="ChEBI" id="CHEBI:15378"/>
        <dbReference type="ChEBI" id="CHEBI:16217"/>
        <dbReference type="ChEBI" id="CHEBI:18391"/>
        <dbReference type="EC" id="3.1.1.17"/>
    </reaction>
</comment>
<comment type="pathway">
    <text>Carbohydrate acid metabolism; D-gluconate biosynthesis; D-gluconate from D-glucono-1,5-lactone: step 1/1.</text>
</comment>
<comment type="subunit">
    <text evidence="2">Homodimer.</text>
</comment>
<comment type="subcellular location">
    <subcellularLocation>
        <location evidence="5">Periplasm</location>
    </subcellularLocation>
</comment>
<comment type="PTM">
    <text evidence="1 2">Predicted to be exported by the Tat system. The position of the signal peptide cleavage has been experimentally proven.</text>
</comment>
<comment type="caution">
    <text evidence="5">It is possible that in some cases Met-40 is the initiator in this case the expressed enzyme would remain cytoplasmic.</text>
</comment>
<gene>
    <name type="primary">gnl</name>
    <name type="ordered locus">ZMO1649</name>
</gene>
<keyword id="KW-0903">Direct protein sequencing</keyword>
<keyword id="KW-0378">Hydrolase</keyword>
<keyword id="KW-0574">Periplasm</keyword>
<keyword id="KW-1185">Reference proteome</keyword>
<keyword id="KW-0719">Serine esterase</keyword>
<keyword id="KW-0732">Signal</keyword>
<organism>
    <name type="scientific">Zymomonas mobilis subsp. mobilis (strain ATCC 31821 / ZM4 / CP4)</name>
    <dbReference type="NCBI Taxonomy" id="264203"/>
    <lineage>
        <taxon>Bacteria</taxon>
        <taxon>Pseudomonadati</taxon>
        <taxon>Pseudomonadota</taxon>
        <taxon>Alphaproteobacteria</taxon>
        <taxon>Sphingomonadales</taxon>
        <taxon>Zymomonadaceae</taxon>
        <taxon>Zymomonas</taxon>
    </lineage>
</organism>
<dbReference type="EC" id="3.1.1.17" evidence="5"/>
<dbReference type="EMBL" id="X67189">
    <property type="protein sequence ID" value="CAA47637.1"/>
    <property type="molecule type" value="Genomic_DNA"/>
</dbReference>
<dbReference type="EMBL" id="AE008692">
    <property type="protein sequence ID" value="AAV90273.1"/>
    <property type="molecule type" value="Genomic_DNA"/>
</dbReference>
<dbReference type="PIR" id="S28218">
    <property type="entry name" value="S28218"/>
</dbReference>
<dbReference type="RefSeq" id="WP_011241398.1">
    <property type="nucleotide sequence ID" value="NZ_CP035711.1"/>
</dbReference>
<dbReference type="SMR" id="Q01578"/>
<dbReference type="STRING" id="264203.ZMO1649"/>
<dbReference type="GeneID" id="79905021"/>
<dbReference type="KEGG" id="zmo:ZMO1649"/>
<dbReference type="eggNOG" id="COG3386">
    <property type="taxonomic scope" value="Bacteria"/>
</dbReference>
<dbReference type="HOGENOM" id="CLU_036110_0_0_5"/>
<dbReference type="BioCyc" id="MetaCyc:MONOMER-13276"/>
<dbReference type="BRENDA" id="3.1.1.17">
    <property type="organism ID" value="14380"/>
</dbReference>
<dbReference type="UniPathway" id="UPA00814">
    <property type="reaction ID" value="UER00785"/>
</dbReference>
<dbReference type="Proteomes" id="UP000001173">
    <property type="component" value="Chromosome"/>
</dbReference>
<dbReference type="GO" id="GO:0042597">
    <property type="term" value="C:periplasmic space"/>
    <property type="evidence" value="ECO:0007669"/>
    <property type="project" value="UniProtKB-SubCell"/>
</dbReference>
<dbReference type="GO" id="GO:0004341">
    <property type="term" value="F:gluconolactonase activity"/>
    <property type="evidence" value="ECO:0000314"/>
    <property type="project" value="CACAO"/>
</dbReference>
<dbReference type="GO" id="GO:0046178">
    <property type="term" value="P:D-gluconate biosynthetic process"/>
    <property type="evidence" value="ECO:0007669"/>
    <property type="project" value="UniProtKB-UniPathway"/>
</dbReference>
<dbReference type="Gene3D" id="2.120.10.30">
    <property type="entry name" value="TolB, C-terminal domain"/>
    <property type="match status" value="1"/>
</dbReference>
<dbReference type="InterPro" id="IPR011042">
    <property type="entry name" value="6-blade_b-propeller_TolB-like"/>
</dbReference>
<dbReference type="InterPro" id="IPR013658">
    <property type="entry name" value="SGL"/>
</dbReference>
<dbReference type="InterPro" id="IPR005511">
    <property type="entry name" value="SMP-30"/>
</dbReference>
<dbReference type="InterPro" id="IPR051262">
    <property type="entry name" value="SMP-30/CGR1_Lactonase"/>
</dbReference>
<dbReference type="InterPro" id="IPR006311">
    <property type="entry name" value="TAT_signal"/>
</dbReference>
<dbReference type="PANTHER" id="PTHR47572:SF4">
    <property type="entry name" value="LACTONASE DRP35"/>
    <property type="match status" value="1"/>
</dbReference>
<dbReference type="PANTHER" id="PTHR47572">
    <property type="entry name" value="LIPOPROTEIN-RELATED"/>
    <property type="match status" value="1"/>
</dbReference>
<dbReference type="Pfam" id="PF08450">
    <property type="entry name" value="SGL"/>
    <property type="match status" value="1"/>
</dbReference>
<dbReference type="PRINTS" id="PR01790">
    <property type="entry name" value="SMP30FAMILY"/>
</dbReference>
<dbReference type="SUPFAM" id="SSF63829">
    <property type="entry name" value="Calcium-dependent phosphotriesterase"/>
    <property type="match status" value="1"/>
</dbReference>
<dbReference type="PROSITE" id="PS51318">
    <property type="entry name" value="TAT"/>
    <property type="match status" value="1"/>
</dbReference>
<evidence type="ECO:0000255" key="1">
    <source>
        <dbReference type="PROSITE-ProRule" id="PRU00648"/>
    </source>
</evidence>
<evidence type="ECO:0000269" key="2">
    <source>
    </source>
</evidence>
<evidence type="ECO:0000303" key="3">
    <source>
    </source>
</evidence>
<evidence type="ECO:0000305" key="4"/>
<evidence type="ECO:0000305" key="5">
    <source>
    </source>
</evidence>
<proteinExistence type="evidence at protein level"/>